<sequence>MITGSIVAIVTPMHEDGSLDFPRLRSLIDWHVAEGTDGIVIVGTTGESPTVSVDEHCELIRVAVEHAAGRIPVIAGTGANSTAEAIALARYAQQAGAVAHLSVVPYYNRPSQEGLYQHFRSVAEAVELPLILYNVPGRTVADLSNDTALRLAEIPNIIGLKDATGSIDRACDLIERAPEGFALYSGDDMTVAAFILLGGHGTISVTANVAPRAMHEMCAAALAGDAAKARTINARLVGLHRHLFCEANPIPVKWAVQRMGLVEGGLRLPLTPLAESFHDRVLTAMRQAGIQA</sequence>
<gene>
    <name evidence="1" type="primary">dapA</name>
    <name type="ordered locus">azo1096</name>
</gene>
<proteinExistence type="inferred from homology"/>
<feature type="chain" id="PRO_1000050162" description="4-hydroxy-tetrahydrodipicolinate synthase">
    <location>
        <begin position="1"/>
        <end position="292"/>
    </location>
</feature>
<feature type="active site" description="Proton donor/acceptor" evidence="1">
    <location>
        <position position="133"/>
    </location>
</feature>
<feature type="active site" description="Schiff-base intermediate with substrate" evidence="1">
    <location>
        <position position="161"/>
    </location>
</feature>
<feature type="binding site" evidence="1">
    <location>
        <position position="45"/>
    </location>
    <ligand>
        <name>pyruvate</name>
        <dbReference type="ChEBI" id="CHEBI:15361"/>
    </ligand>
</feature>
<feature type="binding site" evidence="1">
    <location>
        <position position="203"/>
    </location>
    <ligand>
        <name>pyruvate</name>
        <dbReference type="ChEBI" id="CHEBI:15361"/>
    </ligand>
</feature>
<feature type="site" description="Part of a proton relay during catalysis" evidence="1">
    <location>
        <position position="44"/>
    </location>
</feature>
<feature type="site" description="Part of a proton relay during catalysis" evidence="1">
    <location>
        <position position="107"/>
    </location>
</feature>
<evidence type="ECO:0000255" key="1">
    <source>
        <dbReference type="HAMAP-Rule" id="MF_00418"/>
    </source>
</evidence>
<evidence type="ECO:0000305" key="2"/>
<comment type="function">
    <text evidence="1">Catalyzes the condensation of (S)-aspartate-beta-semialdehyde [(S)-ASA] and pyruvate to 4-hydroxy-tetrahydrodipicolinate (HTPA).</text>
</comment>
<comment type="catalytic activity">
    <reaction evidence="1">
        <text>L-aspartate 4-semialdehyde + pyruvate = (2S,4S)-4-hydroxy-2,3,4,5-tetrahydrodipicolinate + H2O + H(+)</text>
        <dbReference type="Rhea" id="RHEA:34171"/>
        <dbReference type="ChEBI" id="CHEBI:15361"/>
        <dbReference type="ChEBI" id="CHEBI:15377"/>
        <dbReference type="ChEBI" id="CHEBI:15378"/>
        <dbReference type="ChEBI" id="CHEBI:67139"/>
        <dbReference type="ChEBI" id="CHEBI:537519"/>
        <dbReference type="EC" id="4.3.3.7"/>
    </reaction>
</comment>
<comment type="pathway">
    <text evidence="1">Amino-acid biosynthesis; L-lysine biosynthesis via DAP pathway; (S)-tetrahydrodipicolinate from L-aspartate: step 3/4.</text>
</comment>
<comment type="subunit">
    <text evidence="1">Homotetramer; dimer of dimers.</text>
</comment>
<comment type="subcellular location">
    <subcellularLocation>
        <location evidence="1">Cytoplasm</location>
    </subcellularLocation>
</comment>
<comment type="similarity">
    <text evidence="1">Belongs to the DapA family.</text>
</comment>
<comment type="caution">
    <text evidence="2">Was originally thought to be a dihydrodipicolinate synthase (DHDPS), catalyzing the condensation of (S)-aspartate-beta-semialdehyde [(S)-ASA] and pyruvate to dihydrodipicolinate (DHDP). However, it was shown in E.coli that the product of the enzymatic reaction is not dihydrodipicolinate but in fact (4S)-4-hydroxy-2,3,4,5-tetrahydro-(2S)-dipicolinic acid (HTPA), and that the consecutive dehydration reaction leading to DHDP is not spontaneous but catalyzed by DapB.</text>
</comment>
<dbReference type="EC" id="4.3.3.7" evidence="1"/>
<dbReference type="EMBL" id="AM406670">
    <property type="protein sequence ID" value="CAL93713.1"/>
    <property type="molecule type" value="Genomic_DNA"/>
</dbReference>
<dbReference type="RefSeq" id="WP_011764830.1">
    <property type="nucleotide sequence ID" value="NC_008702.1"/>
</dbReference>
<dbReference type="SMR" id="A1K4F8"/>
<dbReference type="STRING" id="62928.azo1096"/>
<dbReference type="KEGG" id="aoa:dqs_1206"/>
<dbReference type="KEGG" id="azo:azo1096"/>
<dbReference type="eggNOG" id="COG0329">
    <property type="taxonomic scope" value="Bacteria"/>
</dbReference>
<dbReference type="HOGENOM" id="CLU_049343_7_1_4"/>
<dbReference type="OrthoDB" id="9782828at2"/>
<dbReference type="UniPathway" id="UPA00034">
    <property type="reaction ID" value="UER00017"/>
</dbReference>
<dbReference type="Proteomes" id="UP000002588">
    <property type="component" value="Chromosome"/>
</dbReference>
<dbReference type="GO" id="GO:0005829">
    <property type="term" value="C:cytosol"/>
    <property type="evidence" value="ECO:0007669"/>
    <property type="project" value="TreeGrafter"/>
</dbReference>
<dbReference type="GO" id="GO:0008840">
    <property type="term" value="F:4-hydroxy-tetrahydrodipicolinate synthase activity"/>
    <property type="evidence" value="ECO:0007669"/>
    <property type="project" value="UniProtKB-UniRule"/>
</dbReference>
<dbReference type="GO" id="GO:0019877">
    <property type="term" value="P:diaminopimelate biosynthetic process"/>
    <property type="evidence" value="ECO:0007669"/>
    <property type="project" value="UniProtKB-UniRule"/>
</dbReference>
<dbReference type="GO" id="GO:0009089">
    <property type="term" value="P:lysine biosynthetic process via diaminopimelate"/>
    <property type="evidence" value="ECO:0007669"/>
    <property type="project" value="UniProtKB-UniRule"/>
</dbReference>
<dbReference type="CDD" id="cd00950">
    <property type="entry name" value="DHDPS"/>
    <property type="match status" value="1"/>
</dbReference>
<dbReference type="Gene3D" id="3.20.20.70">
    <property type="entry name" value="Aldolase class I"/>
    <property type="match status" value="1"/>
</dbReference>
<dbReference type="HAMAP" id="MF_00418">
    <property type="entry name" value="DapA"/>
    <property type="match status" value="1"/>
</dbReference>
<dbReference type="InterPro" id="IPR013785">
    <property type="entry name" value="Aldolase_TIM"/>
</dbReference>
<dbReference type="InterPro" id="IPR005263">
    <property type="entry name" value="DapA"/>
</dbReference>
<dbReference type="InterPro" id="IPR002220">
    <property type="entry name" value="DapA-like"/>
</dbReference>
<dbReference type="InterPro" id="IPR020625">
    <property type="entry name" value="Schiff_base-form_aldolases_AS"/>
</dbReference>
<dbReference type="InterPro" id="IPR020624">
    <property type="entry name" value="Schiff_base-form_aldolases_CS"/>
</dbReference>
<dbReference type="NCBIfam" id="TIGR00674">
    <property type="entry name" value="dapA"/>
    <property type="match status" value="1"/>
</dbReference>
<dbReference type="PANTHER" id="PTHR12128:SF66">
    <property type="entry name" value="4-HYDROXY-2-OXOGLUTARATE ALDOLASE, MITOCHONDRIAL"/>
    <property type="match status" value="1"/>
</dbReference>
<dbReference type="PANTHER" id="PTHR12128">
    <property type="entry name" value="DIHYDRODIPICOLINATE SYNTHASE"/>
    <property type="match status" value="1"/>
</dbReference>
<dbReference type="Pfam" id="PF00701">
    <property type="entry name" value="DHDPS"/>
    <property type="match status" value="1"/>
</dbReference>
<dbReference type="PIRSF" id="PIRSF001365">
    <property type="entry name" value="DHDPS"/>
    <property type="match status" value="1"/>
</dbReference>
<dbReference type="PRINTS" id="PR00146">
    <property type="entry name" value="DHPICSNTHASE"/>
</dbReference>
<dbReference type="SMART" id="SM01130">
    <property type="entry name" value="DHDPS"/>
    <property type="match status" value="1"/>
</dbReference>
<dbReference type="SUPFAM" id="SSF51569">
    <property type="entry name" value="Aldolase"/>
    <property type="match status" value="1"/>
</dbReference>
<dbReference type="PROSITE" id="PS00665">
    <property type="entry name" value="DHDPS_1"/>
    <property type="match status" value="1"/>
</dbReference>
<dbReference type="PROSITE" id="PS00666">
    <property type="entry name" value="DHDPS_2"/>
    <property type="match status" value="1"/>
</dbReference>
<protein>
    <recommendedName>
        <fullName evidence="1">4-hydroxy-tetrahydrodipicolinate synthase</fullName>
        <shortName evidence="1">HTPA synthase</shortName>
        <ecNumber evidence="1">4.3.3.7</ecNumber>
    </recommendedName>
</protein>
<organism>
    <name type="scientific">Azoarcus sp. (strain BH72)</name>
    <dbReference type="NCBI Taxonomy" id="418699"/>
    <lineage>
        <taxon>Bacteria</taxon>
        <taxon>Pseudomonadati</taxon>
        <taxon>Pseudomonadota</taxon>
        <taxon>Betaproteobacteria</taxon>
        <taxon>Rhodocyclales</taxon>
        <taxon>Zoogloeaceae</taxon>
        <taxon>Azoarcus</taxon>
    </lineage>
</organism>
<reference key="1">
    <citation type="journal article" date="2006" name="Nat. Biotechnol.">
        <title>Complete genome of the mutualistic, N2-fixing grass endophyte Azoarcus sp. strain BH72.</title>
        <authorList>
            <person name="Krause A."/>
            <person name="Ramakumar A."/>
            <person name="Bartels D."/>
            <person name="Battistoni F."/>
            <person name="Bekel T."/>
            <person name="Boch J."/>
            <person name="Boehm M."/>
            <person name="Friedrich F."/>
            <person name="Hurek T."/>
            <person name="Krause L."/>
            <person name="Linke B."/>
            <person name="McHardy A.C."/>
            <person name="Sarkar A."/>
            <person name="Schneiker S."/>
            <person name="Syed A.A."/>
            <person name="Thauer R."/>
            <person name="Vorhoelter F.-J."/>
            <person name="Weidner S."/>
            <person name="Puehler A."/>
            <person name="Reinhold-Hurek B."/>
            <person name="Kaiser O."/>
            <person name="Goesmann A."/>
        </authorList>
    </citation>
    <scope>NUCLEOTIDE SEQUENCE [LARGE SCALE GENOMIC DNA]</scope>
    <source>
        <strain>BH72</strain>
    </source>
</reference>
<name>DAPA_AZOSB</name>
<accession>A1K4F8</accession>
<keyword id="KW-0028">Amino-acid biosynthesis</keyword>
<keyword id="KW-0963">Cytoplasm</keyword>
<keyword id="KW-0220">Diaminopimelate biosynthesis</keyword>
<keyword id="KW-0456">Lyase</keyword>
<keyword id="KW-0457">Lysine biosynthesis</keyword>
<keyword id="KW-1185">Reference proteome</keyword>
<keyword id="KW-0704">Schiff base</keyword>